<accession>Q8U9U5</accession>
<accession>Q7CSY5</accession>
<feature type="chain" id="PRO_0000223724" description="Acetyl-coenzyme A carboxylase carboxyl transferase subunit alpha">
    <location>
        <begin position="1"/>
        <end position="317"/>
    </location>
</feature>
<feature type="domain" description="CoA carboxyltransferase C-terminal" evidence="2">
    <location>
        <begin position="39"/>
        <end position="293"/>
    </location>
</feature>
<evidence type="ECO:0000255" key="1">
    <source>
        <dbReference type="HAMAP-Rule" id="MF_00823"/>
    </source>
</evidence>
<evidence type="ECO:0000255" key="2">
    <source>
        <dbReference type="PROSITE-ProRule" id="PRU01137"/>
    </source>
</evidence>
<gene>
    <name evidence="1" type="primary">accA</name>
    <name type="ordered locus">Atu3630</name>
    <name type="ORF">AGR_L_2394</name>
</gene>
<name>ACCA_AGRFC</name>
<reference key="1">
    <citation type="journal article" date="2001" name="Science">
        <title>The genome of the natural genetic engineer Agrobacterium tumefaciens C58.</title>
        <authorList>
            <person name="Wood D.W."/>
            <person name="Setubal J.C."/>
            <person name="Kaul R."/>
            <person name="Monks D.E."/>
            <person name="Kitajima J.P."/>
            <person name="Okura V.K."/>
            <person name="Zhou Y."/>
            <person name="Chen L."/>
            <person name="Wood G.E."/>
            <person name="Almeida N.F. Jr."/>
            <person name="Woo L."/>
            <person name="Chen Y."/>
            <person name="Paulsen I.T."/>
            <person name="Eisen J.A."/>
            <person name="Karp P.D."/>
            <person name="Bovee D. Sr."/>
            <person name="Chapman P."/>
            <person name="Clendenning J."/>
            <person name="Deatherage G."/>
            <person name="Gillet W."/>
            <person name="Grant C."/>
            <person name="Kutyavin T."/>
            <person name="Levy R."/>
            <person name="Li M.-J."/>
            <person name="McClelland E."/>
            <person name="Palmieri A."/>
            <person name="Raymond C."/>
            <person name="Rouse G."/>
            <person name="Saenphimmachak C."/>
            <person name="Wu Z."/>
            <person name="Romero P."/>
            <person name="Gordon D."/>
            <person name="Zhang S."/>
            <person name="Yoo H."/>
            <person name="Tao Y."/>
            <person name="Biddle P."/>
            <person name="Jung M."/>
            <person name="Krespan W."/>
            <person name="Perry M."/>
            <person name="Gordon-Kamm B."/>
            <person name="Liao L."/>
            <person name="Kim S."/>
            <person name="Hendrick C."/>
            <person name="Zhao Z.-Y."/>
            <person name="Dolan M."/>
            <person name="Chumley F."/>
            <person name="Tingey S.V."/>
            <person name="Tomb J.-F."/>
            <person name="Gordon M.P."/>
            <person name="Olson M.V."/>
            <person name="Nester E.W."/>
        </authorList>
    </citation>
    <scope>NUCLEOTIDE SEQUENCE [LARGE SCALE GENOMIC DNA]</scope>
    <source>
        <strain>C58 / ATCC 33970</strain>
    </source>
</reference>
<reference key="2">
    <citation type="journal article" date="2001" name="Science">
        <title>Genome sequence of the plant pathogen and biotechnology agent Agrobacterium tumefaciens C58.</title>
        <authorList>
            <person name="Goodner B."/>
            <person name="Hinkle G."/>
            <person name="Gattung S."/>
            <person name="Miller N."/>
            <person name="Blanchard M."/>
            <person name="Qurollo B."/>
            <person name="Goldman B.S."/>
            <person name="Cao Y."/>
            <person name="Askenazi M."/>
            <person name="Halling C."/>
            <person name="Mullin L."/>
            <person name="Houmiel K."/>
            <person name="Gordon J."/>
            <person name="Vaudin M."/>
            <person name="Iartchouk O."/>
            <person name="Epp A."/>
            <person name="Liu F."/>
            <person name="Wollam C."/>
            <person name="Allinger M."/>
            <person name="Doughty D."/>
            <person name="Scott C."/>
            <person name="Lappas C."/>
            <person name="Markelz B."/>
            <person name="Flanagan C."/>
            <person name="Crowell C."/>
            <person name="Gurson J."/>
            <person name="Lomo C."/>
            <person name="Sear C."/>
            <person name="Strub G."/>
            <person name="Cielo C."/>
            <person name="Slater S."/>
        </authorList>
    </citation>
    <scope>NUCLEOTIDE SEQUENCE [LARGE SCALE GENOMIC DNA]</scope>
    <source>
        <strain>C58 / ATCC 33970</strain>
    </source>
</reference>
<sequence length="317" mass="34542">MHNYLDFEKPISDLEGKIIELKKLADEDESIDTSEEINRLESRVNDAMQDIYSKLNAWQKTQVARHPQRPHFVDYAKSLFTDFTPLAGDRKFSEDAAIQAGLARFNGQPVAIIGQEKGNDTKSRLKHNFGSARPEGYRKAIRVLELADRFSLPVVTLIDTAGAYPGVGAEERGQAEAIARSTEMCLNVKVPIVSVVIGEGGSGGAIAIATGNRVYMLEHSVYSVISPEGAASILWRDSTRAKEAATNMKITSEDLKSLGVIDGIIPEPIGGAHRAPETVISATGDVIAKALADLSQRSGTQLRAERRQKFLDIGRNL</sequence>
<protein>
    <recommendedName>
        <fullName evidence="1">Acetyl-coenzyme A carboxylase carboxyl transferase subunit alpha</fullName>
        <shortName evidence="1">ACCase subunit alpha</shortName>
        <shortName evidence="1">Acetyl-CoA carboxylase carboxyltransferase subunit alpha</shortName>
        <ecNumber evidence="1">2.1.3.15</ecNumber>
    </recommendedName>
</protein>
<dbReference type="EC" id="2.1.3.15" evidence="1"/>
<dbReference type="EMBL" id="AE007870">
    <property type="protein sequence ID" value="AAK89767.1"/>
    <property type="molecule type" value="Genomic_DNA"/>
</dbReference>
<dbReference type="PIR" id="AD3003">
    <property type="entry name" value="AD3003"/>
</dbReference>
<dbReference type="PIR" id="E98280">
    <property type="entry name" value="E98280"/>
</dbReference>
<dbReference type="RefSeq" id="NP_356982.1">
    <property type="nucleotide sequence ID" value="NC_003063.2"/>
</dbReference>
<dbReference type="RefSeq" id="WP_006310357.1">
    <property type="nucleotide sequence ID" value="NC_003063.2"/>
</dbReference>
<dbReference type="SMR" id="Q8U9U5"/>
<dbReference type="STRING" id="176299.Atu3630"/>
<dbReference type="EnsemblBacteria" id="AAK89767">
    <property type="protein sequence ID" value="AAK89767"/>
    <property type="gene ID" value="Atu3630"/>
</dbReference>
<dbReference type="GeneID" id="1135504"/>
<dbReference type="KEGG" id="atu:Atu3630"/>
<dbReference type="PATRIC" id="fig|176299.10.peg.3476"/>
<dbReference type="eggNOG" id="COG0825">
    <property type="taxonomic scope" value="Bacteria"/>
</dbReference>
<dbReference type="HOGENOM" id="CLU_015486_0_2_5"/>
<dbReference type="OrthoDB" id="9808023at2"/>
<dbReference type="PhylomeDB" id="Q8U9U5"/>
<dbReference type="BioCyc" id="AGRO:ATU3630-MONOMER"/>
<dbReference type="UniPathway" id="UPA00655">
    <property type="reaction ID" value="UER00711"/>
</dbReference>
<dbReference type="Proteomes" id="UP000000813">
    <property type="component" value="Chromosome linear"/>
</dbReference>
<dbReference type="GO" id="GO:0009317">
    <property type="term" value="C:acetyl-CoA carboxylase complex"/>
    <property type="evidence" value="ECO:0007669"/>
    <property type="project" value="InterPro"/>
</dbReference>
<dbReference type="GO" id="GO:0003989">
    <property type="term" value="F:acetyl-CoA carboxylase activity"/>
    <property type="evidence" value="ECO:0007669"/>
    <property type="project" value="InterPro"/>
</dbReference>
<dbReference type="GO" id="GO:0005524">
    <property type="term" value="F:ATP binding"/>
    <property type="evidence" value="ECO:0007669"/>
    <property type="project" value="UniProtKB-KW"/>
</dbReference>
<dbReference type="GO" id="GO:0016743">
    <property type="term" value="F:carboxyl- or carbamoyltransferase activity"/>
    <property type="evidence" value="ECO:0007669"/>
    <property type="project" value="UniProtKB-UniRule"/>
</dbReference>
<dbReference type="GO" id="GO:0006633">
    <property type="term" value="P:fatty acid biosynthetic process"/>
    <property type="evidence" value="ECO:0007669"/>
    <property type="project" value="UniProtKB-KW"/>
</dbReference>
<dbReference type="GO" id="GO:2001295">
    <property type="term" value="P:malonyl-CoA biosynthetic process"/>
    <property type="evidence" value="ECO:0007669"/>
    <property type="project" value="UniProtKB-UniRule"/>
</dbReference>
<dbReference type="Gene3D" id="3.90.226.10">
    <property type="entry name" value="2-enoyl-CoA Hydratase, Chain A, domain 1"/>
    <property type="match status" value="1"/>
</dbReference>
<dbReference type="HAMAP" id="MF_00823">
    <property type="entry name" value="AcetylCoA_CT_alpha"/>
    <property type="match status" value="1"/>
</dbReference>
<dbReference type="InterPro" id="IPR001095">
    <property type="entry name" value="Acetyl_CoA_COase_a_su"/>
</dbReference>
<dbReference type="InterPro" id="IPR029045">
    <property type="entry name" value="ClpP/crotonase-like_dom_sf"/>
</dbReference>
<dbReference type="InterPro" id="IPR011763">
    <property type="entry name" value="COA_CT_C"/>
</dbReference>
<dbReference type="NCBIfam" id="TIGR00513">
    <property type="entry name" value="accA"/>
    <property type="match status" value="1"/>
</dbReference>
<dbReference type="NCBIfam" id="NF041504">
    <property type="entry name" value="AccA_sub"/>
    <property type="match status" value="1"/>
</dbReference>
<dbReference type="NCBIfam" id="NF004344">
    <property type="entry name" value="PRK05724.1"/>
    <property type="match status" value="1"/>
</dbReference>
<dbReference type="PANTHER" id="PTHR42853">
    <property type="entry name" value="ACETYL-COENZYME A CARBOXYLASE CARBOXYL TRANSFERASE SUBUNIT ALPHA"/>
    <property type="match status" value="1"/>
</dbReference>
<dbReference type="PANTHER" id="PTHR42853:SF3">
    <property type="entry name" value="ACETYL-COENZYME A CARBOXYLASE CARBOXYL TRANSFERASE SUBUNIT ALPHA, CHLOROPLASTIC"/>
    <property type="match status" value="1"/>
</dbReference>
<dbReference type="Pfam" id="PF03255">
    <property type="entry name" value="ACCA"/>
    <property type="match status" value="1"/>
</dbReference>
<dbReference type="PRINTS" id="PR01069">
    <property type="entry name" value="ACCCTRFRASEA"/>
</dbReference>
<dbReference type="SUPFAM" id="SSF52096">
    <property type="entry name" value="ClpP/crotonase"/>
    <property type="match status" value="1"/>
</dbReference>
<dbReference type="PROSITE" id="PS50989">
    <property type="entry name" value="COA_CT_CTER"/>
    <property type="match status" value="1"/>
</dbReference>
<organism>
    <name type="scientific">Agrobacterium fabrum (strain C58 / ATCC 33970)</name>
    <name type="common">Agrobacterium tumefaciens (strain C58)</name>
    <dbReference type="NCBI Taxonomy" id="176299"/>
    <lineage>
        <taxon>Bacteria</taxon>
        <taxon>Pseudomonadati</taxon>
        <taxon>Pseudomonadota</taxon>
        <taxon>Alphaproteobacteria</taxon>
        <taxon>Hyphomicrobiales</taxon>
        <taxon>Rhizobiaceae</taxon>
        <taxon>Rhizobium/Agrobacterium group</taxon>
        <taxon>Agrobacterium</taxon>
        <taxon>Agrobacterium tumefaciens complex</taxon>
    </lineage>
</organism>
<keyword id="KW-0067">ATP-binding</keyword>
<keyword id="KW-0963">Cytoplasm</keyword>
<keyword id="KW-0275">Fatty acid biosynthesis</keyword>
<keyword id="KW-0276">Fatty acid metabolism</keyword>
<keyword id="KW-0444">Lipid biosynthesis</keyword>
<keyword id="KW-0443">Lipid metabolism</keyword>
<keyword id="KW-0547">Nucleotide-binding</keyword>
<keyword id="KW-1185">Reference proteome</keyword>
<keyword id="KW-0808">Transferase</keyword>
<comment type="function">
    <text evidence="1">Component of the acetyl coenzyme A carboxylase (ACC) complex. First, biotin carboxylase catalyzes the carboxylation of biotin on its carrier protein (BCCP) and then the CO(2) group is transferred by the carboxyltransferase to acetyl-CoA to form malonyl-CoA.</text>
</comment>
<comment type="catalytic activity">
    <reaction evidence="1">
        <text>N(6)-carboxybiotinyl-L-lysyl-[protein] + acetyl-CoA = N(6)-biotinyl-L-lysyl-[protein] + malonyl-CoA</text>
        <dbReference type="Rhea" id="RHEA:54728"/>
        <dbReference type="Rhea" id="RHEA-COMP:10505"/>
        <dbReference type="Rhea" id="RHEA-COMP:10506"/>
        <dbReference type="ChEBI" id="CHEBI:57288"/>
        <dbReference type="ChEBI" id="CHEBI:57384"/>
        <dbReference type="ChEBI" id="CHEBI:83144"/>
        <dbReference type="ChEBI" id="CHEBI:83145"/>
        <dbReference type="EC" id="2.1.3.15"/>
    </reaction>
</comment>
<comment type="pathway">
    <text evidence="1">Lipid metabolism; malonyl-CoA biosynthesis; malonyl-CoA from acetyl-CoA: step 1/1.</text>
</comment>
<comment type="subunit">
    <text evidence="1">Acetyl-CoA carboxylase is a heterohexamer composed of biotin carboxyl carrier protein (AccB), biotin carboxylase (AccC) and two subunits each of ACCase subunit alpha (AccA) and ACCase subunit beta (AccD).</text>
</comment>
<comment type="subcellular location">
    <subcellularLocation>
        <location evidence="1">Cytoplasm</location>
    </subcellularLocation>
</comment>
<comment type="similarity">
    <text evidence="1">Belongs to the AccA family.</text>
</comment>
<proteinExistence type="inferred from homology"/>